<sequence>MSNYSIKQSAKNNYSSSSSGGFRGGHGGNEYFCGVGGEGDFGGMGGFGACGAGYGGGAGYGGGAGGAGYGGGAGGGGAGYGGGFGGGSGAGYGGGFGGGAGGGYGGGFGGGFGGGAGGMDIFSTNEKQTMQNLNDRLASYLDKVHALETANTELERKIKEWYEKQRPGSSSGDGAKDYSKYYTMINDLKNQIIAASIENAKFLLQNDNARLAADDFKMKFENEQYMRQTVEADINGLRRVMDDLTLSKSDLESQLESLSEELAYLKKNHEDELKGMQVTQVGQVNVEMNAAPSSDLTKILNDMRSQYEDLAKRNRAAAEEQFNRMSTDLKNTLSQGIEQQKESKSELTELKRTLQSLEIELQSQLAMKKSLEMTLAEVEGSFCMKLSRLQEMIVNVEEQIARLKGESECQTAEYQQLLDIKTRLENEIETYRRLLDGDLSKPKSGGGTSTNTGSTSSKGSTRTVKRREIIEEVVDGKVVSTKVVDM</sequence>
<dbReference type="EMBL" id="Y00968">
    <property type="protein sequence ID" value="CAA68783.1"/>
    <property type="molecule type" value="mRNA"/>
</dbReference>
<dbReference type="PIR" id="S01327">
    <property type="entry name" value="KRXL"/>
</dbReference>
<dbReference type="PIR" id="S04511">
    <property type="entry name" value="S04511"/>
</dbReference>
<dbReference type="RefSeq" id="NP_001081485.1">
    <property type="nucleotide sequence ID" value="NM_001088016.1"/>
</dbReference>
<dbReference type="SMR" id="P02537"/>
<dbReference type="BioGRID" id="99202">
    <property type="interactions" value="1"/>
</dbReference>
<dbReference type="GeneID" id="397864"/>
<dbReference type="KEGG" id="xla:397864"/>
<dbReference type="AGR" id="Xenbase:XB-GENE-22060973"/>
<dbReference type="CTD" id="397864"/>
<dbReference type="Xenbase" id="XB-GENE-22060973">
    <property type="gene designation" value="krt57.L"/>
</dbReference>
<dbReference type="OrthoDB" id="2441647at2759"/>
<dbReference type="Proteomes" id="UP000186698">
    <property type="component" value="Chromosome 9_10L"/>
</dbReference>
<dbReference type="Bgee" id="397864">
    <property type="expression patterns" value="Expressed in zone of skin and 11 other cell types or tissues"/>
</dbReference>
<dbReference type="GO" id="GO:0005856">
    <property type="term" value="C:cytoskeleton"/>
    <property type="evidence" value="ECO:0000318"/>
    <property type="project" value="GO_Central"/>
</dbReference>
<dbReference type="GO" id="GO:0005882">
    <property type="term" value="C:intermediate filament"/>
    <property type="evidence" value="ECO:0007669"/>
    <property type="project" value="UniProtKB-KW"/>
</dbReference>
<dbReference type="GO" id="GO:0005198">
    <property type="term" value="F:structural molecule activity"/>
    <property type="evidence" value="ECO:0007669"/>
    <property type="project" value="InterPro"/>
</dbReference>
<dbReference type="GO" id="GO:0030855">
    <property type="term" value="P:epithelial cell differentiation"/>
    <property type="evidence" value="ECO:0000318"/>
    <property type="project" value="GO_Central"/>
</dbReference>
<dbReference type="GO" id="GO:0045109">
    <property type="term" value="P:intermediate filament organization"/>
    <property type="evidence" value="ECO:0000318"/>
    <property type="project" value="GO_Central"/>
</dbReference>
<dbReference type="FunFam" id="1.20.5.1160:FF:000002">
    <property type="entry name" value="Type I keratin 10"/>
    <property type="match status" value="1"/>
</dbReference>
<dbReference type="FunFam" id="1.20.5.170:FF:000002">
    <property type="entry name" value="Type I keratin KA11"/>
    <property type="match status" value="1"/>
</dbReference>
<dbReference type="FunFam" id="1.20.5.500:FF:000001">
    <property type="entry name" value="Type II keratin 23"/>
    <property type="match status" value="1"/>
</dbReference>
<dbReference type="Gene3D" id="1.20.5.170">
    <property type="match status" value="1"/>
</dbReference>
<dbReference type="Gene3D" id="1.20.5.500">
    <property type="entry name" value="Single helix bin"/>
    <property type="match status" value="1"/>
</dbReference>
<dbReference type="Gene3D" id="1.20.5.1160">
    <property type="entry name" value="Vasodilator-stimulated phosphoprotein"/>
    <property type="match status" value="1"/>
</dbReference>
<dbReference type="InterPro" id="IPR018039">
    <property type="entry name" value="IF_conserved"/>
</dbReference>
<dbReference type="InterPro" id="IPR039008">
    <property type="entry name" value="IF_rod_dom"/>
</dbReference>
<dbReference type="InterPro" id="IPR002957">
    <property type="entry name" value="Keratin_I"/>
</dbReference>
<dbReference type="PANTHER" id="PTHR23239">
    <property type="entry name" value="INTERMEDIATE FILAMENT"/>
    <property type="match status" value="1"/>
</dbReference>
<dbReference type="PANTHER" id="PTHR23239:SF392">
    <property type="entry name" value="KERATIN-3, TYPE I CYTOSKELETAL 51 KDA"/>
    <property type="match status" value="1"/>
</dbReference>
<dbReference type="Pfam" id="PF00038">
    <property type="entry name" value="Filament"/>
    <property type="match status" value="1"/>
</dbReference>
<dbReference type="PRINTS" id="PR01248">
    <property type="entry name" value="TYPE1KERATIN"/>
</dbReference>
<dbReference type="SMART" id="SM01391">
    <property type="entry name" value="Filament"/>
    <property type="match status" value="1"/>
</dbReference>
<dbReference type="SUPFAM" id="SSF64593">
    <property type="entry name" value="Intermediate filament protein, coiled coil region"/>
    <property type="match status" value="2"/>
</dbReference>
<dbReference type="PROSITE" id="PS00226">
    <property type="entry name" value="IF_ROD_1"/>
    <property type="match status" value="1"/>
</dbReference>
<dbReference type="PROSITE" id="PS51842">
    <property type="entry name" value="IF_ROD_2"/>
    <property type="match status" value="1"/>
</dbReference>
<organism>
    <name type="scientific">Xenopus laevis</name>
    <name type="common">African clawed frog</name>
    <dbReference type="NCBI Taxonomy" id="8355"/>
    <lineage>
        <taxon>Eukaryota</taxon>
        <taxon>Metazoa</taxon>
        <taxon>Chordata</taxon>
        <taxon>Craniata</taxon>
        <taxon>Vertebrata</taxon>
        <taxon>Euteleostomi</taxon>
        <taxon>Amphibia</taxon>
        <taxon>Batrachia</taxon>
        <taxon>Anura</taxon>
        <taxon>Pipoidea</taxon>
        <taxon>Pipidae</taxon>
        <taxon>Xenopodinae</taxon>
        <taxon>Xenopus</taxon>
        <taxon>Xenopus</taxon>
    </lineage>
</organism>
<feature type="chain" id="PRO_0000063679" description="Keratin-3, type I cytoskeletal 51 kDa">
    <location>
        <begin position="1"/>
        <end position="486"/>
    </location>
</feature>
<feature type="domain" description="IF rod" evidence="1">
    <location>
        <begin position="126"/>
        <end position="442"/>
    </location>
</feature>
<feature type="region of interest" description="Head">
    <location>
        <begin position="1"/>
        <end position="125"/>
    </location>
</feature>
<feature type="region of interest" description="Coil 1A">
    <location>
        <begin position="126"/>
        <end position="161"/>
    </location>
</feature>
<feature type="region of interest" description="Linker 1">
    <location>
        <begin position="162"/>
        <end position="184"/>
    </location>
</feature>
<feature type="region of interest" description="Coil 1B">
    <location>
        <begin position="185"/>
        <end position="276"/>
    </location>
</feature>
<feature type="region of interest" description="Linker 12">
    <location>
        <begin position="277"/>
        <end position="299"/>
    </location>
</feature>
<feature type="region of interest" description="Coil 2">
    <location>
        <begin position="300"/>
        <end position="438"/>
    </location>
</feature>
<feature type="region of interest" description="Disordered" evidence="2">
    <location>
        <begin position="435"/>
        <end position="466"/>
    </location>
</feature>
<feature type="region of interest" description="Tail">
    <location>
        <begin position="439"/>
        <end position="486"/>
    </location>
</feature>
<feature type="compositionally biased region" description="Low complexity" evidence="2">
    <location>
        <begin position="449"/>
        <end position="461"/>
    </location>
</feature>
<feature type="site" description="Stutter">
    <location>
        <position position="380"/>
    </location>
</feature>
<feature type="sequence conflict" description="In Ref. 2." evidence="3" ref="2">
    <original>R</original>
    <variation>T</variation>
    <location>
        <position position="352"/>
    </location>
</feature>
<accession>P02537</accession>
<protein>
    <recommendedName>
        <fullName>Keratin-3, type I cytoskeletal 51 kDa</fullName>
    </recommendedName>
    <alternativeName>
        <fullName>51 kDa cytokeratin</fullName>
    </alternativeName>
</protein>
<name>K1C0_XENLA</name>
<keyword id="KW-0175">Coiled coil</keyword>
<keyword id="KW-0403">Intermediate filament</keyword>
<keyword id="KW-0416">Keratin</keyword>
<keyword id="KW-1185">Reference proteome</keyword>
<comment type="subunit">
    <text>Heterotetramer of two type I and two type II keratins.</text>
</comment>
<comment type="miscellaneous">
    <text>There are two types of cytoskeletal and microfibrillar keratin: I (acidic; 40-55 kDa) and II (neutral to basic; 56-70 kDa).</text>
</comment>
<comment type="similarity">
    <text evidence="1">Belongs to the intermediate filament family.</text>
</comment>
<evidence type="ECO:0000255" key="1">
    <source>
        <dbReference type="PROSITE-ProRule" id="PRU01188"/>
    </source>
</evidence>
<evidence type="ECO:0000256" key="2">
    <source>
        <dbReference type="SAM" id="MobiDB-lite"/>
    </source>
</evidence>
<evidence type="ECO:0000305" key="3"/>
<reference key="1">
    <citation type="journal article" date="1988" name="FEBS Lett.">
        <title>Amino acid sequence microheterogeneities of a type I cytokeratin of Mr 51,000 from Xenopus laevis epidermis.</title>
        <authorList>
            <person name="Hoffmann W."/>
            <person name="Sterrer S."/>
            <person name="Koenigstorfer A."/>
        </authorList>
    </citation>
    <scope>NUCLEOTIDE SEQUENCE [MRNA]</scope>
</reference>
<reference key="2">
    <citation type="journal article" date="1984" name="EMBO J.">
        <title>Amino acid sequence of the carboxy-terminal part of an acidic type I cytokeratin of molecular weight 51 000 from Xenopus laevis epidermis as predicted from the cDNA sequence.</title>
        <authorList>
            <person name="Hoffmann W."/>
            <person name="Franz J.K."/>
        </authorList>
    </citation>
    <scope>NUCLEOTIDE SEQUENCE [MRNA] OF 339-386</scope>
</reference>
<proteinExistence type="evidence at transcript level"/>